<reference key="1">
    <citation type="submission" date="2006-06" db="EMBL/GenBank/DDBJ databases">
        <title>Complete sequence of Pseudoalteromonas atlantica T6c.</title>
        <authorList>
            <consortium name="US DOE Joint Genome Institute"/>
            <person name="Copeland A."/>
            <person name="Lucas S."/>
            <person name="Lapidus A."/>
            <person name="Barry K."/>
            <person name="Detter J.C."/>
            <person name="Glavina del Rio T."/>
            <person name="Hammon N."/>
            <person name="Israni S."/>
            <person name="Dalin E."/>
            <person name="Tice H."/>
            <person name="Pitluck S."/>
            <person name="Saunders E."/>
            <person name="Brettin T."/>
            <person name="Bruce D."/>
            <person name="Han C."/>
            <person name="Tapia R."/>
            <person name="Gilna P."/>
            <person name="Schmutz J."/>
            <person name="Larimer F."/>
            <person name="Land M."/>
            <person name="Hauser L."/>
            <person name="Kyrpides N."/>
            <person name="Kim E."/>
            <person name="Karls A.C."/>
            <person name="Bartlett D."/>
            <person name="Higgins B.P."/>
            <person name="Richardson P."/>
        </authorList>
    </citation>
    <scope>NUCLEOTIDE SEQUENCE [LARGE SCALE GENOMIC DNA]</scope>
    <source>
        <strain>T6c / ATCC BAA-1087</strain>
    </source>
</reference>
<keyword id="KW-0227">DNA damage</keyword>
<keyword id="KW-0234">DNA repair</keyword>
<keyword id="KW-0235">DNA replication</keyword>
<keyword id="KW-0436">Ligase</keyword>
<keyword id="KW-0460">Magnesium</keyword>
<keyword id="KW-0464">Manganese</keyword>
<keyword id="KW-0479">Metal-binding</keyword>
<keyword id="KW-0520">NAD</keyword>
<keyword id="KW-0862">Zinc</keyword>
<comment type="function">
    <text evidence="1">DNA ligase that catalyzes the formation of phosphodiester linkages between 5'-phosphoryl and 3'-hydroxyl groups in double-stranded DNA using NAD as a coenzyme and as the energy source for the reaction. It is essential for DNA replication and repair of damaged DNA.</text>
</comment>
<comment type="catalytic activity">
    <reaction evidence="1">
        <text>NAD(+) + (deoxyribonucleotide)n-3'-hydroxyl + 5'-phospho-(deoxyribonucleotide)m = (deoxyribonucleotide)n+m + AMP + beta-nicotinamide D-nucleotide.</text>
        <dbReference type="EC" id="6.5.1.2"/>
    </reaction>
</comment>
<comment type="cofactor">
    <cofactor evidence="1">
        <name>Mg(2+)</name>
        <dbReference type="ChEBI" id="CHEBI:18420"/>
    </cofactor>
    <cofactor evidence="1">
        <name>Mn(2+)</name>
        <dbReference type="ChEBI" id="CHEBI:29035"/>
    </cofactor>
</comment>
<comment type="similarity">
    <text evidence="1">Belongs to the NAD-dependent DNA ligase family. LigA subfamily.</text>
</comment>
<evidence type="ECO:0000255" key="1">
    <source>
        <dbReference type="HAMAP-Rule" id="MF_01588"/>
    </source>
</evidence>
<gene>
    <name evidence="1" type="primary">ligA</name>
    <name type="ordered locus">Patl_1776</name>
</gene>
<sequence length="677" mass="74236">MSNALSPAQRLTQIINTINEYNYQYYVQDNPSVPDAEYDRLMRELLDIENNHPDLRSPDSPSQKVGGAALSAFEQVEHEVPMLSLDNAFDEDDMQAFEKRIKDRLKISSEISFSCEPKLDGLAVSILYENGQLVRAATRGDGRVGENITTNVRTIANVPLRLRGENFPSRLEVRGEVIMTRAGFVTLNEAQIKKGKKPFVNPRNAAAGSLRQLDPKITAARPLLFYSYSLGLVENEQQPLGETHSSRLAQLSEWGLPLSKELEVTQGATQCLTYFHKIGELRSQLSYDIDGVVFKVDNIAMQQELGFVARAPRWAIAHKFPAQEEMSTLLDVEFQVGRTGAITPVARLEPTFVGGVTVSNATLHNQDEINRLGIKIGDSVIIRRAGDVIPQIVAIVADKRPDDAKDIVFPESCPVCDSAIEKLEGEAVARCTGGLYCKAQRKEAMKHFASRKALDVDGLGDKLIEQLVDAEMVKSPADFFALDIAPLSSMERMGEKSAVNLVNALEKSKKTTLAKFLYSLGIREVGEATAQNLAQHFLTLEAIEQADLDALQAVSDVGVIVAQHVFNFFKEEHNLEVISALLEAGVHWPKIEKLALDELPLAGQVYVLTGTLNVMDRNSAKAKLQSLGAKVSGSVSAKTDCLVAGEKAGSKLTKAQDLGVKVMNEDDMLAMFADLEG</sequence>
<dbReference type="EC" id="6.5.1.2" evidence="1"/>
<dbReference type="EMBL" id="CP000388">
    <property type="protein sequence ID" value="ABG40297.1"/>
    <property type="molecule type" value="Genomic_DNA"/>
</dbReference>
<dbReference type="RefSeq" id="WP_011574598.1">
    <property type="nucleotide sequence ID" value="NC_008228.1"/>
</dbReference>
<dbReference type="SMR" id="Q15UZ1"/>
<dbReference type="STRING" id="342610.Patl_1776"/>
<dbReference type="KEGG" id="pat:Patl_1776"/>
<dbReference type="eggNOG" id="COG0272">
    <property type="taxonomic scope" value="Bacteria"/>
</dbReference>
<dbReference type="HOGENOM" id="CLU_007764_2_1_6"/>
<dbReference type="OrthoDB" id="9759736at2"/>
<dbReference type="Proteomes" id="UP000001981">
    <property type="component" value="Chromosome"/>
</dbReference>
<dbReference type="GO" id="GO:0005829">
    <property type="term" value="C:cytosol"/>
    <property type="evidence" value="ECO:0007669"/>
    <property type="project" value="TreeGrafter"/>
</dbReference>
<dbReference type="GO" id="GO:0003677">
    <property type="term" value="F:DNA binding"/>
    <property type="evidence" value="ECO:0007669"/>
    <property type="project" value="InterPro"/>
</dbReference>
<dbReference type="GO" id="GO:0003911">
    <property type="term" value="F:DNA ligase (NAD+) activity"/>
    <property type="evidence" value="ECO:0007669"/>
    <property type="project" value="UniProtKB-UniRule"/>
</dbReference>
<dbReference type="GO" id="GO:0046872">
    <property type="term" value="F:metal ion binding"/>
    <property type="evidence" value="ECO:0007669"/>
    <property type="project" value="UniProtKB-KW"/>
</dbReference>
<dbReference type="GO" id="GO:0006281">
    <property type="term" value="P:DNA repair"/>
    <property type="evidence" value="ECO:0007669"/>
    <property type="project" value="UniProtKB-KW"/>
</dbReference>
<dbReference type="GO" id="GO:0006260">
    <property type="term" value="P:DNA replication"/>
    <property type="evidence" value="ECO:0007669"/>
    <property type="project" value="UniProtKB-KW"/>
</dbReference>
<dbReference type="CDD" id="cd17748">
    <property type="entry name" value="BRCT_DNA_ligase_like"/>
    <property type="match status" value="1"/>
</dbReference>
<dbReference type="CDD" id="cd00114">
    <property type="entry name" value="LIGANc"/>
    <property type="match status" value="1"/>
</dbReference>
<dbReference type="FunFam" id="1.10.150.20:FF:000006">
    <property type="entry name" value="DNA ligase"/>
    <property type="match status" value="1"/>
</dbReference>
<dbReference type="FunFam" id="1.10.150.20:FF:000007">
    <property type="entry name" value="DNA ligase"/>
    <property type="match status" value="1"/>
</dbReference>
<dbReference type="FunFam" id="1.10.287.610:FF:000002">
    <property type="entry name" value="DNA ligase"/>
    <property type="match status" value="1"/>
</dbReference>
<dbReference type="FunFam" id="2.40.50.140:FF:000012">
    <property type="entry name" value="DNA ligase"/>
    <property type="match status" value="1"/>
</dbReference>
<dbReference type="FunFam" id="3.30.470.30:FF:000001">
    <property type="entry name" value="DNA ligase"/>
    <property type="match status" value="1"/>
</dbReference>
<dbReference type="FunFam" id="6.20.10.30:FF:000001">
    <property type="entry name" value="DNA ligase"/>
    <property type="match status" value="1"/>
</dbReference>
<dbReference type="Gene3D" id="6.20.10.30">
    <property type="match status" value="1"/>
</dbReference>
<dbReference type="Gene3D" id="1.10.150.20">
    <property type="entry name" value="5' to 3' exonuclease, C-terminal subdomain"/>
    <property type="match status" value="2"/>
</dbReference>
<dbReference type="Gene3D" id="3.40.50.10190">
    <property type="entry name" value="BRCT domain"/>
    <property type="match status" value="1"/>
</dbReference>
<dbReference type="Gene3D" id="3.30.470.30">
    <property type="entry name" value="DNA ligase/mRNA capping enzyme"/>
    <property type="match status" value="1"/>
</dbReference>
<dbReference type="Gene3D" id="1.10.287.610">
    <property type="entry name" value="Helix hairpin bin"/>
    <property type="match status" value="1"/>
</dbReference>
<dbReference type="Gene3D" id="2.40.50.140">
    <property type="entry name" value="Nucleic acid-binding proteins"/>
    <property type="match status" value="1"/>
</dbReference>
<dbReference type="HAMAP" id="MF_01588">
    <property type="entry name" value="DNA_ligase_A"/>
    <property type="match status" value="1"/>
</dbReference>
<dbReference type="InterPro" id="IPR001357">
    <property type="entry name" value="BRCT_dom"/>
</dbReference>
<dbReference type="InterPro" id="IPR036420">
    <property type="entry name" value="BRCT_dom_sf"/>
</dbReference>
<dbReference type="InterPro" id="IPR041663">
    <property type="entry name" value="DisA/LigA_HHH"/>
</dbReference>
<dbReference type="InterPro" id="IPR001679">
    <property type="entry name" value="DNA_ligase"/>
</dbReference>
<dbReference type="InterPro" id="IPR018239">
    <property type="entry name" value="DNA_ligase_AS"/>
</dbReference>
<dbReference type="InterPro" id="IPR013839">
    <property type="entry name" value="DNAligase_adenylation"/>
</dbReference>
<dbReference type="InterPro" id="IPR013840">
    <property type="entry name" value="DNAligase_N"/>
</dbReference>
<dbReference type="InterPro" id="IPR003583">
    <property type="entry name" value="Hlx-hairpin-Hlx_DNA-bd_motif"/>
</dbReference>
<dbReference type="InterPro" id="IPR012340">
    <property type="entry name" value="NA-bd_OB-fold"/>
</dbReference>
<dbReference type="InterPro" id="IPR004150">
    <property type="entry name" value="NAD_DNA_ligase_OB"/>
</dbReference>
<dbReference type="InterPro" id="IPR010994">
    <property type="entry name" value="RuvA_2-like"/>
</dbReference>
<dbReference type="InterPro" id="IPR004149">
    <property type="entry name" value="Znf_DNAligase_C4"/>
</dbReference>
<dbReference type="NCBIfam" id="TIGR00575">
    <property type="entry name" value="dnlj"/>
    <property type="match status" value="1"/>
</dbReference>
<dbReference type="NCBIfam" id="NF005932">
    <property type="entry name" value="PRK07956.1"/>
    <property type="match status" value="1"/>
</dbReference>
<dbReference type="PANTHER" id="PTHR23389">
    <property type="entry name" value="CHROMOSOME TRANSMISSION FIDELITY FACTOR 18"/>
    <property type="match status" value="1"/>
</dbReference>
<dbReference type="PANTHER" id="PTHR23389:SF9">
    <property type="entry name" value="DNA LIGASE"/>
    <property type="match status" value="1"/>
</dbReference>
<dbReference type="Pfam" id="PF00533">
    <property type="entry name" value="BRCT"/>
    <property type="match status" value="1"/>
</dbReference>
<dbReference type="Pfam" id="PF01653">
    <property type="entry name" value="DNA_ligase_aden"/>
    <property type="match status" value="1"/>
</dbReference>
<dbReference type="Pfam" id="PF03120">
    <property type="entry name" value="DNA_ligase_OB"/>
    <property type="match status" value="1"/>
</dbReference>
<dbReference type="Pfam" id="PF03119">
    <property type="entry name" value="DNA_ligase_ZBD"/>
    <property type="match status" value="1"/>
</dbReference>
<dbReference type="Pfam" id="PF12826">
    <property type="entry name" value="HHH_2"/>
    <property type="match status" value="1"/>
</dbReference>
<dbReference type="Pfam" id="PF14520">
    <property type="entry name" value="HHH_5"/>
    <property type="match status" value="1"/>
</dbReference>
<dbReference type="PIRSF" id="PIRSF001604">
    <property type="entry name" value="LigA"/>
    <property type="match status" value="1"/>
</dbReference>
<dbReference type="SMART" id="SM00292">
    <property type="entry name" value="BRCT"/>
    <property type="match status" value="1"/>
</dbReference>
<dbReference type="SMART" id="SM00278">
    <property type="entry name" value="HhH1"/>
    <property type="match status" value="4"/>
</dbReference>
<dbReference type="SMART" id="SM00532">
    <property type="entry name" value="LIGANc"/>
    <property type="match status" value="1"/>
</dbReference>
<dbReference type="SUPFAM" id="SSF52113">
    <property type="entry name" value="BRCT domain"/>
    <property type="match status" value="1"/>
</dbReference>
<dbReference type="SUPFAM" id="SSF56091">
    <property type="entry name" value="DNA ligase/mRNA capping enzyme, catalytic domain"/>
    <property type="match status" value="1"/>
</dbReference>
<dbReference type="SUPFAM" id="SSF50249">
    <property type="entry name" value="Nucleic acid-binding proteins"/>
    <property type="match status" value="1"/>
</dbReference>
<dbReference type="SUPFAM" id="SSF47781">
    <property type="entry name" value="RuvA domain 2-like"/>
    <property type="match status" value="1"/>
</dbReference>
<dbReference type="PROSITE" id="PS50172">
    <property type="entry name" value="BRCT"/>
    <property type="match status" value="1"/>
</dbReference>
<dbReference type="PROSITE" id="PS01055">
    <property type="entry name" value="DNA_LIGASE_N1"/>
    <property type="match status" value="1"/>
</dbReference>
<organism>
    <name type="scientific">Pseudoalteromonas atlantica (strain T6c / ATCC BAA-1087)</name>
    <dbReference type="NCBI Taxonomy" id="3042615"/>
    <lineage>
        <taxon>Bacteria</taxon>
        <taxon>Pseudomonadati</taxon>
        <taxon>Pseudomonadota</taxon>
        <taxon>Gammaproteobacteria</taxon>
        <taxon>Alteromonadales</taxon>
        <taxon>Alteromonadaceae</taxon>
        <taxon>Paraglaciecola</taxon>
    </lineage>
</organism>
<name>DNLJ_PSEA6</name>
<proteinExistence type="inferred from homology"/>
<protein>
    <recommendedName>
        <fullName evidence="1">DNA ligase</fullName>
        <ecNumber evidence="1">6.5.1.2</ecNumber>
    </recommendedName>
    <alternativeName>
        <fullName evidence="1">Polydeoxyribonucleotide synthase [NAD(+)]</fullName>
    </alternativeName>
</protein>
<accession>Q15UZ1</accession>
<feature type="chain" id="PRO_0000313371" description="DNA ligase">
    <location>
        <begin position="1"/>
        <end position="677"/>
    </location>
</feature>
<feature type="domain" description="BRCT" evidence="1">
    <location>
        <begin position="596"/>
        <end position="677"/>
    </location>
</feature>
<feature type="active site" description="N6-AMP-lysine intermediate" evidence="1">
    <location>
        <position position="118"/>
    </location>
</feature>
<feature type="binding site" evidence="1">
    <location>
        <begin position="35"/>
        <end position="39"/>
    </location>
    <ligand>
        <name>NAD(+)</name>
        <dbReference type="ChEBI" id="CHEBI:57540"/>
    </ligand>
</feature>
<feature type="binding site" evidence="1">
    <location>
        <begin position="84"/>
        <end position="85"/>
    </location>
    <ligand>
        <name>NAD(+)</name>
        <dbReference type="ChEBI" id="CHEBI:57540"/>
    </ligand>
</feature>
<feature type="binding site" evidence="1">
    <location>
        <position position="116"/>
    </location>
    <ligand>
        <name>NAD(+)</name>
        <dbReference type="ChEBI" id="CHEBI:57540"/>
    </ligand>
</feature>
<feature type="binding site" evidence="1">
    <location>
        <position position="139"/>
    </location>
    <ligand>
        <name>NAD(+)</name>
        <dbReference type="ChEBI" id="CHEBI:57540"/>
    </ligand>
</feature>
<feature type="binding site" evidence="1">
    <location>
        <position position="176"/>
    </location>
    <ligand>
        <name>NAD(+)</name>
        <dbReference type="ChEBI" id="CHEBI:57540"/>
    </ligand>
</feature>
<feature type="binding site" evidence="1">
    <location>
        <position position="295"/>
    </location>
    <ligand>
        <name>NAD(+)</name>
        <dbReference type="ChEBI" id="CHEBI:57540"/>
    </ligand>
</feature>
<feature type="binding site" evidence="1">
    <location>
        <position position="319"/>
    </location>
    <ligand>
        <name>NAD(+)</name>
        <dbReference type="ChEBI" id="CHEBI:57540"/>
    </ligand>
</feature>
<feature type="binding site" evidence="1">
    <location>
        <position position="413"/>
    </location>
    <ligand>
        <name>Zn(2+)</name>
        <dbReference type="ChEBI" id="CHEBI:29105"/>
    </ligand>
</feature>
<feature type="binding site" evidence="1">
    <location>
        <position position="416"/>
    </location>
    <ligand>
        <name>Zn(2+)</name>
        <dbReference type="ChEBI" id="CHEBI:29105"/>
    </ligand>
</feature>
<feature type="binding site" evidence="1">
    <location>
        <position position="431"/>
    </location>
    <ligand>
        <name>Zn(2+)</name>
        <dbReference type="ChEBI" id="CHEBI:29105"/>
    </ligand>
</feature>
<feature type="binding site" evidence="1">
    <location>
        <position position="437"/>
    </location>
    <ligand>
        <name>Zn(2+)</name>
        <dbReference type="ChEBI" id="CHEBI:29105"/>
    </ligand>
</feature>